<reference key="1">
    <citation type="journal article" date="2000" name="Nature">
        <title>Genome sequence of the endocellular bacterial symbiont of aphids Buchnera sp. APS.</title>
        <authorList>
            <person name="Shigenobu S."/>
            <person name="Watanabe H."/>
            <person name="Hattori M."/>
            <person name="Sakaki Y."/>
            <person name="Ishikawa H."/>
        </authorList>
    </citation>
    <scope>NUCLEOTIDE SEQUENCE [LARGE SCALE GENOMIC DNA]</scope>
    <source>
        <strain>APS</strain>
    </source>
</reference>
<protein>
    <recommendedName>
        <fullName>Cytosol aminopeptidase</fullName>
        <ecNumber>3.4.11.1</ecNumber>
    </recommendedName>
    <alternativeName>
        <fullName>Leucine aminopeptidase</fullName>
        <shortName>LAP</shortName>
        <ecNumber>3.4.11.10</ecNumber>
    </alternativeName>
    <alternativeName>
        <fullName>Leucyl aminopeptidase</fullName>
    </alternativeName>
</protein>
<accession>P57448</accession>
<gene>
    <name type="primary">pepA</name>
    <name type="ordered locus">BU367</name>
</gene>
<proteinExistence type="inferred from homology"/>
<dbReference type="EC" id="3.4.11.1"/>
<dbReference type="EC" id="3.4.11.10"/>
<dbReference type="EMBL" id="BA000003">
    <property type="protein sequence ID" value="BAB13071.1"/>
    <property type="molecule type" value="Genomic_DNA"/>
</dbReference>
<dbReference type="RefSeq" id="NP_240185.1">
    <property type="nucleotide sequence ID" value="NC_002528.1"/>
</dbReference>
<dbReference type="RefSeq" id="WP_010896089.1">
    <property type="nucleotide sequence ID" value="NC_002528.1"/>
</dbReference>
<dbReference type="SMR" id="P57448"/>
<dbReference type="STRING" id="563178.BUAP5A_360"/>
<dbReference type="MEROPS" id="M17.003"/>
<dbReference type="EnsemblBacteria" id="BAB13071">
    <property type="protein sequence ID" value="BAB13071"/>
    <property type="gene ID" value="BAB13071"/>
</dbReference>
<dbReference type="KEGG" id="buc:BU367"/>
<dbReference type="PATRIC" id="fig|107806.10.peg.381"/>
<dbReference type="eggNOG" id="COG0260">
    <property type="taxonomic scope" value="Bacteria"/>
</dbReference>
<dbReference type="HOGENOM" id="CLU_013734_2_2_6"/>
<dbReference type="Proteomes" id="UP000001806">
    <property type="component" value="Chromosome"/>
</dbReference>
<dbReference type="GO" id="GO:0005737">
    <property type="term" value="C:cytoplasm"/>
    <property type="evidence" value="ECO:0007669"/>
    <property type="project" value="UniProtKB-SubCell"/>
</dbReference>
<dbReference type="GO" id="GO:0030145">
    <property type="term" value="F:manganese ion binding"/>
    <property type="evidence" value="ECO:0007669"/>
    <property type="project" value="UniProtKB-UniRule"/>
</dbReference>
<dbReference type="GO" id="GO:0070006">
    <property type="term" value="F:metalloaminopeptidase activity"/>
    <property type="evidence" value="ECO:0007669"/>
    <property type="project" value="InterPro"/>
</dbReference>
<dbReference type="GO" id="GO:0006508">
    <property type="term" value="P:proteolysis"/>
    <property type="evidence" value="ECO:0007669"/>
    <property type="project" value="UniProtKB-KW"/>
</dbReference>
<dbReference type="CDD" id="cd00433">
    <property type="entry name" value="Peptidase_M17"/>
    <property type="match status" value="1"/>
</dbReference>
<dbReference type="FunFam" id="3.40.630.10:FF:000004">
    <property type="entry name" value="Probable cytosol aminopeptidase"/>
    <property type="match status" value="1"/>
</dbReference>
<dbReference type="Gene3D" id="3.40.220.10">
    <property type="entry name" value="Leucine Aminopeptidase, subunit E, domain 1"/>
    <property type="match status" value="1"/>
</dbReference>
<dbReference type="Gene3D" id="3.40.630.10">
    <property type="entry name" value="Zn peptidases"/>
    <property type="match status" value="1"/>
</dbReference>
<dbReference type="HAMAP" id="MF_00181">
    <property type="entry name" value="Cytosol_peptidase_M17"/>
    <property type="match status" value="1"/>
</dbReference>
<dbReference type="InterPro" id="IPR011356">
    <property type="entry name" value="Leucine_aapep/pepB"/>
</dbReference>
<dbReference type="InterPro" id="IPR043472">
    <property type="entry name" value="Macro_dom-like"/>
</dbReference>
<dbReference type="InterPro" id="IPR000819">
    <property type="entry name" value="Peptidase_M17_C"/>
</dbReference>
<dbReference type="InterPro" id="IPR023042">
    <property type="entry name" value="Peptidase_M17_leu_NH2_pept"/>
</dbReference>
<dbReference type="InterPro" id="IPR008283">
    <property type="entry name" value="Peptidase_M17_N"/>
</dbReference>
<dbReference type="NCBIfam" id="NF002074">
    <property type="entry name" value="PRK00913.1-4"/>
    <property type="match status" value="1"/>
</dbReference>
<dbReference type="PANTHER" id="PTHR11963:SF23">
    <property type="entry name" value="CYTOSOL AMINOPEPTIDASE"/>
    <property type="match status" value="1"/>
</dbReference>
<dbReference type="PANTHER" id="PTHR11963">
    <property type="entry name" value="LEUCINE AMINOPEPTIDASE-RELATED"/>
    <property type="match status" value="1"/>
</dbReference>
<dbReference type="Pfam" id="PF00883">
    <property type="entry name" value="Peptidase_M17"/>
    <property type="match status" value="1"/>
</dbReference>
<dbReference type="Pfam" id="PF02789">
    <property type="entry name" value="Peptidase_M17_N"/>
    <property type="match status" value="1"/>
</dbReference>
<dbReference type="PRINTS" id="PR00481">
    <property type="entry name" value="LAMNOPPTDASE"/>
</dbReference>
<dbReference type="SUPFAM" id="SSF52949">
    <property type="entry name" value="Macro domain-like"/>
    <property type="match status" value="1"/>
</dbReference>
<dbReference type="SUPFAM" id="SSF53187">
    <property type="entry name" value="Zn-dependent exopeptidases"/>
    <property type="match status" value="1"/>
</dbReference>
<dbReference type="PROSITE" id="PS00631">
    <property type="entry name" value="CYTOSOL_AP"/>
    <property type="match status" value="1"/>
</dbReference>
<name>AMPA_BUCAI</name>
<feature type="chain" id="PRO_0000165730" description="Cytosol aminopeptidase">
    <location>
        <begin position="1"/>
        <end position="499"/>
    </location>
</feature>
<feature type="active site" evidence="2">
    <location>
        <position position="279"/>
    </location>
</feature>
<feature type="active site" evidence="2">
    <location>
        <position position="353"/>
    </location>
</feature>
<feature type="binding site" evidence="1">
    <location>
        <position position="267"/>
    </location>
    <ligand>
        <name>Mn(2+)</name>
        <dbReference type="ChEBI" id="CHEBI:29035"/>
        <label>2</label>
    </ligand>
</feature>
<feature type="binding site" evidence="1">
    <location>
        <position position="272"/>
    </location>
    <ligand>
        <name>Mn(2+)</name>
        <dbReference type="ChEBI" id="CHEBI:29035"/>
        <label>1</label>
    </ligand>
</feature>
<feature type="binding site" evidence="1">
    <location>
        <position position="272"/>
    </location>
    <ligand>
        <name>Mn(2+)</name>
        <dbReference type="ChEBI" id="CHEBI:29035"/>
        <label>2</label>
    </ligand>
</feature>
<feature type="binding site" evidence="1">
    <location>
        <position position="290"/>
    </location>
    <ligand>
        <name>Mn(2+)</name>
        <dbReference type="ChEBI" id="CHEBI:29035"/>
        <label>2</label>
    </ligand>
</feature>
<feature type="binding site" evidence="1">
    <location>
        <position position="349"/>
    </location>
    <ligand>
        <name>Mn(2+)</name>
        <dbReference type="ChEBI" id="CHEBI:29035"/>
        <label>1</label>
    </ligand>
</feature>
<feature type="binding site" evidence="1">
    <location>
        <position position="351"/>
    </location>
    <ligand>
        <name>Mn(2+)</name>
        <dbReference type="ChEBI" id="CHEBI:29035"/>
        <label>1</label>
    </ligand>
</feature>
<feature type="binding site" evidence="1">
    <location>
        <position position="351"/>
    </location>
    <ligand>
        <name>Mn(2+)</name>
        <dbReference type="ChEBI" id="CHEBI:29035"/>
        <label>2</label>
    </ligand>
</feature>
<evidence type="ECO:0000250" key="1"/>
<evidence type="ECO:0000255" key="2"/>
<evidence type="ECO:0000305" key="3"/>
<keyword id="KW-0031">Aminopeptidase</keyword>
<keyword id="KW-0963">Cytoplasm</keyword>
<keyword id="KW-0378">Hydrolase</keyword>
<keyword id="KW-0464">Manganese</keyword>
<keyword id="KW-0479">Metal-binding</keyword>
<keyword id="KW-0645">Protease</keyword>
<keyword id="KW-1185">Reference proteome</keyword>
<comment type="function">
    <text evidence="1">Presumably involved in the processing and regular turnover of intracellular proteins. Catalyzes the removal of unsubstituted N-terminal amino acids from various peptides (By similarity).</text>
</comment>
<comment type="catalytic activity">
    <reaction>
        <text>Release of an N-terminal amino acid, Xaa-|-Yaa-, in which Xaa is preferably Leu, but may be other amino acids including Pro although not Arg or Lys, and Yaa may be Pro. Amino acid amides and methyl esters are also readily hydrolyzed, but rates on arylamides are exceedingly low.</text>
        <dbReference type="EC" id="3.4.11.1"/>
    </reaction>
</comment>
<comment type="catalytic activity">
    <reaction>
        <text>Release of an N-terminal amino acid, preferentially leucine, but not glutamic or aspartic acids.</text>
        <dbReference type="EC" id="3.4.11.10"/>
    </reaction>
</comment>
<comment type="cofactor">
    <cofactor evidence="1">
        <name>Mn(2+)</name>
        <dbReference type="ChEBI" id="CHEBI:29035"/>
    </cofactor>
    <text evidence="1">Binds 2 manganese ions per subunit.</text>
</comment>
<comment type="subcellular location">
    <subcellularLocation>
        <location evidence="1">Cytoplasm</location>
    </subcellularLocation>
</comment>
<comment type="similarity">
    <text evidence="3">Belongs to the peptidase M17 family.</text>
</comment>
<organism>
    <name type="scientific">Buchnera aphidicola subsp. Acyrthosiphon pisum (strain APS)</name>
    <name type="common">Acyrthosiphon pisum symbiotic bacterium</name>
    <dbReference type="NCBI Taxonomy" id="107806"/>
    <lineage>
        <taxon>Bacteria</taxon>
        <taxon>Pseudomonadati</taxon>
        <taxon>Pseudomonadota</taxon>
        <taxon>Gammaproteobacteria</taxon>
        <taxon>Enterobacterales</taxon>
        <taxon>Erwiniaceae</taxon>
        <taxon>Buchnera</taxon>
    </lineage>
</organism>
<sequence length="499" mass="55268">MNFFIKSCFLDKEKTDCIVVSVFELSELSDSAIYLDKCSNGHITSLIKLGDIQGKIGDTLMLYKVPKILSKRILLVGCGKKDEINIIRFKKILKNTIHAIKKKSITNIVYSFSNINIDNIYWMIRRMVLSLKESLYETIKINNINIKNTNIHSITLNIIKKNDLFIAKTALKHALAIDHAITSTKNLSNLPPNICNPLYLSYKAQELSKKYENNIVVEIIDIKKMKELGMNAYIAVGNGSKNKPFMSVIKYSGNNIVNKKIIAFVGKGLTFDSGGISIKPALHMHEMKYDMCGAAAVYGTLIMAAELQLPLTVIGILSGCENMVGSHSFRPGDVLTTMSGQTVEILNTDAEGRLVLCDSLTYLERFSPDIVIDVATLTGACVTALGESVSGLFSNNEELSNQLLHASQETDDKIWSLPLFSEYHKELNSDIADFSNIGRGKAGAITAACFLSKFTKKYNWAHLDIAGTAWKSGKKSGATGRPVELLCQFLLNQSNYIYN</sequence>